<protein>
    <recommendedName>
        <fullName evidence="1">GTP-dependent dephospho-CoA kinase</fullName>
        <ecNumber evidence="1">2.7.1.237</ecNumber>
    </recommendedName>
    <alternativeName>
        <fullName evidence="1">Dephospho-coenzyme A kinase</fullName>
        <shortName evidence="1">DPCK</shortName>
    </alternativeName>
</protein>
<organism>
    <name type="scientific">Pyrobaculum islandicum (strain DSM 4184 / JCM 9189 / GEO3)</name>
    <dbReference type="NCBI Taxonomy" id="384616"/>
    <lineage>
        <taxon>Archaea</taxon>
        <taxon>Thermoproteota</taxon>
        <taxon>Thermoprotei</taxon>
        <taxon>Thermoproteales</taxon>
        <taxon>Thermoproteaceae</taxon>
        <taxon>Pyrobaculum</taxon>
    </lineage>
</organism>
<feature type="chain" id="PRO_0000380065" description="GTP-dependent dephospho-CoA kinase">
    <location>
        <begin position="1"/>
        <end position="168"/>
    </location>
</feature>
<feature type="binding site" evidence="1">
    <location>
        <position position="49"/>
    </location>
    <ligand>
        <name>GTP</name>
        <dbReference type="ChEBI" id="CHEBI:37565"/>
    </ligand>
</feature>
<feature type="binding site" evidence="1">
    <location>
        <position position="50"/>
    </location>
    <ligand>
        <name>GTP</name>
        <dbReference type="ChEBI" id="CHEBI:37565"/>
    </ligand>
</feature>
<feature type="binding site" evidence="1">
    <location>
        <position position="51"/>
    </location>
    <ligand>
        <name>GTP</name>
        <dbReference type="ChEBI" id="CHEBI:37565"/>
    </ligand>
</feature>
<feature type="binding site" evidence="1">
    <location>
        <position position="68"/>
    </location>
    <ligand>
        <name>GTP</name>
        <dbReference type="ChEBI" id="CHEBI:37565"/>
    </ligand>
</feature>
<feature type="binding site" evidence="1">
    <location>
        <position position="70"/>
    </location>
    <ligand>
        <name>GTP</name>
        <dbReference type="ChEBI" id="CHEBI:37565"/>
    </ligand>
</feature>
<feature type="binding site" evidence="1">
    <location>
        <position position="120"/>
    </location>
    <ligand>
        <name>GTP</name>
        <dbReference type="ChEBI" id="CHEBI:37565"/>
    </ligand>
</feature>
<accession>A1RRU0</accession>
<evidence type="ECO:0000255" key="1">
    <source>
        <dbReference type="HAMAP-Rule" id="MF_00590"/>
    </source>
</evidence>
<proteinExistence type="inferred from homology"/>
<sequence length="168" mass="19224">MTCFKLCCRRDLFAFPYPVAIWKEPPRSIEVVRDLVESYGIEQIYTVGDIVTTNFLKYSLAPTSAAVDGKTRRGLKIDKPTFFRKTIEVYNPPGYITEEAWIAVEEAVRDNVMIKVNGEEDMLSLAFIKLAPPHSVVVYGHYMGALIAIPVDWYRDAICKLFEYLEKC</sequence>
<reference key="1">
    <citation type="submission" date="2006-12" db="EMBL/GenBank/DDBJ databases">
        <title>Complete sequence of Pyrobaculum islandicum DSM 4184.</title>
        <authorList>
            <person name="Copeland A."/>
            <person name="Lucas S."/>
            <person name="Lapidus A."/>
            <person name="Barry K."/>
            <person name="Detter J.C."/>
            <person name="Glavina del Rio T."/>
            <person name="Dalin E."/>
            <person name="Tice H."/>
            <person name="Pitluck S."/>
            <person name="Meincke L."/>
            <person name="Brettin T."/>
            <person name="Bruce D."/>
            <person name="Han C."/>
            <person name="Tapia R."/>
            <person name="Gilna P."/>
            <person name="Schmutz J."/>
            <person name="Larimer F."/>
            <person name="Land M."/>
            <person name="Hauser L."/>
            <person name="Kyrpides N."/>
            <person name="Mikhailova N."/>
            <person name="Cozen A.E."/>
            <person name="Fitz-Gibbon S.T."/>
            <person name="House C.H."/>
            <person name="Saltikov C."/>
            <person name="Lowe T."/>
            <person name="Richardson P."/>
        </authorList>
    </citation>
    <scope>NUCLEOTIDE SEQUENCE [LARGE SCALE GENOMIC DNA]</scope>
    <source>
        <strain>DSM 4184 / JCM 9189 / GEO3</strain>
    </source>
</reference>
<comment type="function">
    <text evidence="1">Catalyzes the GTP-dependent phosphorylation of the 3'-hydroxyl group of dephosphocoenzyme A to form coenzyme A (CoA).</text>
</comment>
<comment type="catalytic activity">
    <reaction evidence="1">
        <text>3'-dephospho-CoA + GTP = GDP + CoA + H(+)</text>
        <dbReference type="Rhea" id="RHEA:61156"/>
        <dbReference type="ChEBI" id="CHEBI:15378"/>
        <dbReference type="ChEBI" id="CHEBI:37565"/>
        <dbReference type="ChEBI" id="CHEBI:57287"/>
        <dbReference type="ChEBI" id="CHEBI:57328"/>
        <dbReference type="ChEBI" id="CHEBI:58189"/>
        <dbReference type="EC" id="2.7.1.237"/>
    </reaction>
</comment>
<comment type="pathway">
    <text evidence="1">Cofactor biosynthesis; coenzyme A biosynthesis.</text>
</comment>
<comment type="similarity">
    <text evidence="1">Belongs to the GTP-dependent DPCK family.</text>
</comment>
<name>DPCKG_PYRIL</name>
<keyword id="KW-0173">Coenzyme A biosynthesis</keyword>
<keyword id="KW-0342">GTP-binding</keyword>
<keyword id="KW-0418">Kinase</keyword>
<keyword id="KW-0547">Nucleotide-binding</keyword>
<keyword id="KW-0808">Transferase</keyword>
<dbReference type="EC" id="2.7.1.237" evidence="1"/>
<dbReference type="EMBL" id="CP000504">
    <property type="protein sequence ID" value="ABL87672.1"/>
    <property type="molecule type" value="Genomic_DNA"/>
</dbReference>
<dbReference type="RefSeq" id="WP_011762249.1">
    <property type="nucleotide sequence ID" value="NC_008701.1"/>
</dbReference>
<dbReference type="SMR" id="A1RRU0"/>
<dbReference type="STRING" id="384616.Pisl_0494"/>
<dbReference type="GeneID" id="4618040"/>
<dbReference type="KEGG" id="pis:Pisl_0494"/>
<dbReference type="eggNOG" id="arCOG04076">
    <property type="taxonomic scope" value="Archaea"/>
</dbReference>
<dbReference type="HOGENOM" id="CLU_120795_1_0_2"/>
<dbReference type="OrthoDB" id="15447at2157"/>
<dbReference type="UniPathway" id="UPA00241"/>
<dbReference type="Proteomes" id="UP000002595">
    <property type="component" value="Chromosome"/>
</dbReference>
<dbReference type="GO" id="GO:0005525">
    <property type="term" value="F:GTP binding"/>
    <property type="evidence" value="ECO:0007669"/>
    <property type="project" value="UniProtKB-UniRule"/>
</dbReference>
<dbReference type="GO" id="GO:0016301">
    <property type="term" value="F:kinase activity"/>
    <property type="evidence" value="ECO:0007669"/>
    <property type="project" value="UniProtKB-UniRule"/>
</dbReference>
<dbReference type="GO" id="GO:0015937">
    <property type="term" value="P:coenzyme A biosynthetic process"/>
    <property type="evidence" value="ECO:0007669"/>
    <property type="project" value="UniProtKB-UniRule"/>
</dbReference>
<dbReference type="HAMAP" id="MF_00590">
    <property type="entry name" value="Dephospho_CoA_kinase_GTP_dep"/>
    <property type="match status" value="1"/>
</dbReference>
<dbReference type="InterPro" id="IPR007164">
    <property type="entry name" value="GTP-dep_dephospho-CoA_kin"/>
</dbReference>
<dbReference type="PANTHER" id="PTHR40732:SF1">
    <property type="entry name" value="GTP-DEPENDENT DEPHOSPHO-COA KINASE"/>
    <property type="match status" value="1"/>
</dbReference>
<dbReference type="PANTHER" id="PTHR40732">
    <property type="entry name" value="UPF0218 PROTEIN TK1697"/>
    <property type="match status" value="1"/>
</dbReference>
<dbReference type="Pfam" id="PF04019">
    <property type="entry name" value="DUF359"/>
    <property type="match status" value="1"/>
</dbReference>
<gene>
    <name type="ordered locus">Pisl_0494</name>
</gene>